<keyword id="KW-0413">Isomerase</keyword>
<keyword id="KW-0423">Lactose metabolism</keyword>
<proteinExistence type="inferred from homology"/>
<reference key="1">
    <citation type="journal article" date="1991" name="J. Bacteriol.">
        <title>Lactose metabolism by Staphylococcus aureus: characterization of lacABCD, the structural genes of the tagatose 6-phosphate pathway.</title>
        <authorList>
            <person name="Rosey E.L."/>
            <person name="Oskouian B."/>
            <person name="Stewart G.C."/>
        </authorList>
    </citation>
    <scope>NUCLEOTIDE SEQUENCE [GENOMIC DNA]</scope>
</reference>
<comment type="catalytic activity">
    <reaction evidence="1">
        <text>aldehydo-D-galactose 6-phosphate = keto-D-tagatose 6-phosphate</text>
        <dbReference type="Rhea" id="RHEA:13033"/>
        <dbReference type="ChEBI" id="CHEBI:58255"/>
        <dbReference type="ChEBI" id="CHEBI:134283"/>
        <dbReference type="EC" id="5.3.1.26"/>
    </reaction>
</comment>
<comment type="pathway">
    <text evidence="1">Carbohydrate metabolism; D-galactose 6-phosphate degradation; D-tagatose 6-phosphate from D-galactose 6-phosphate: step 1/1.</text>
</comment>
<comment type="subunit">
    <text evidence="1">Heteromultimeric protein consisting of LacA and LacB.</text>
</comment>
<comment type="similarity">
    <text evidence="1">Belongs to the LacAB/RpiB family.</text>
</comment>
<feature type="chain" id="PRO_0000208136" description="Galactose-6-phosphate isomerase subunit LacB">
    <location>
        <begin position="1"/>
        <end position="171"/>
    </location>
</feature>
<protein>
    <recommendedName>
        <fullName evidence="1">Galactose-6-phosphate isomerase subunit LacB</fullName>
        <ecNumber evidence="1">5.3.1.26</ecNumber>
    </recommendedName>
</protein>
<sequence length="171" mass="18951">MKIALGCDHIVTDTKMRVSEFLKSKGHEVIDVGTYDFTRTHYPIFGKKVGEQVVSGNADLGVCICGTGVGINNAVNKVPGVRSALVRDMTSALYAKEELNANVIGFGGRIIGELLMCDIIDAFINAEYKPTEENKKLIAKIKHLETSNADQADPHFFDEFLEKWDRGEYHD</sequence>
<dbReference type="EC" id="5.3.1.26" evidence="1"/>
<dbReference type="EMBL" id="M64724">
    <property type="protein sequence ID" value="AAA26641.1"/>
    <property type="molecule type" value="Genomic_DNA"/>
</dbReference>
<dbReference type="PIR" id="B38158">
    <property type="entry name" value="B38158"/>
</dbReference>
<dbReference type="RefSeq" id="WP_000684746.1">
    <property type="nucleotide sequence ID" value="NZ_WWFR01000005.1"/>
</dbReference>
<dbReference type="SMR" id="P0C1R6"/>
<dbReference type="OMA" id="VREWLTY"/>
<dbReference type="BioCyc" id="MetaCyc:MONOMER-2782"/>
<dbReference type="UniPathway" id="UPA00702">
    <property type="reaction ID" value="UER00714"/>
</dbReference>
<dbReference type="GO" id="GO:0050044">
    <property type="term" value="F:galactose-6-phosphate isomerase activity"/>
    <property type="evidence" value="ECO:0007669"/>
    <property type="project" value="UniProtKB-UniRule"/>
</dbReference>
<dbReference type="GO" id="GO:0004751">
    <property type="term" value="F:ribose-5-phosphate isomerase activity"/>
    <property type="evidence" value="ECO:0007669"/>
    <property type="project" value="TreeGrafter"/>
</dbReference>
<dbReference type="GO" id="GO:0019316">
    <property type="term" value="P:D-allose catabolic process"/>
    <property type="evidence" value="ECO:0007669"/>
    <property type="project" value="TreeGrafter"/>
</dbReference>
<dbReference type="GO" id="GO:0019388">
    <property type="term" value="P:galactose catabolic process"/>
    <property type="evidence" value="ECO:0007669"/>
    <property type="project" value="UniProtKB-UniPathway"/>
</dbReference>
<dbReference type="GO" id="GO:0019512">
    <property type="term" value="P:lactose catabolic process via tagatose-6-phosphate"/>
    <property type="evidence" value="ECO:0007669"/>
    <property type="project" value="UniProtKB-UniRule"/>
</dbReference>
<dbReference type="GO" id="GO:0009052">
    <property type="term" value="P:pentose-phosphate shunt, non-oxidative branch"/>
    <property type="evidence" value="ECO:0007669"/>
    <property type="project" value="TreeGrafter"/>
</dbReference>
<dbReference type="Gene3D" id="3.40.1400.10">
    <property type="entry name" value="Sugar-phosphate isomerase, RpiB/LacA/LacB"/>
    <property type="match status" value="1"/>
</dbReference>
<dbReference type="HAMAP" id="MF_01556">
    <property type="entry name" value="LacB"/>
    <property type="match status" value="1"/>
</dbReference>
<dbReference type="InterPro" id="IPR004784">
    <property type="entry name" value="LacB"/>
</dbReference>
<dbReference type="InterPro" id="IPR003500">
    <property type="entry name" value="RpiB_LacA_LacB"/>
</dbReference>
<dbReference type="InterPro" id="IPR036569">
    <property type="entry name" value="RpiB_LacA_LacB_sf"/>
</dbReference>
<dbReference type="NCBIfam" id="TIGR01119">
    <property type="entry name" value="lacB"/>
    <property type="match status" value="1"/>
</dbReference>
<dbReference type="NCBIfam" id="NF004051">
    <property type="entry name" value="PRK05571.1"/>
    <property type="match status" value="1"/>
</dbReference>
<dbReference type="NCBIfam" id="NF006381">
    <property type="entry name" value="PRK08622.1"/>
    <property type="match status" value="1"/>
</dbReference>
<dbReference type="NCBIfam" id="NF009258">
    <property type="entry name" value="PRK12615.1"/>
    <property type="match status" value="1"/>
</dbReference>
<dbReference type="NCBIfam" id="TIGR00689">
    <property type="entry name" value="rpiB_lacA_lacB"/>
    <property type="match status" value="1"/>
</dbReference>
<dbReference type="PANTHER" id="PTHR30345:SF0">
    <property type="entry name" value="DNA DAMAGE-REPAIR_TOLERATION PROTEIN DRT102"/>
    <property type="match status" value="1"/>
</dbReference>
<dbReference type="PANTHER" id="PTHR30345">
    <property type="entry name" value="RIBOSE-5-PHOSPHATE ISOMERASE B"/>
    <property type="match status" value="1"/>
</dbReference>
<dbReference type="Pfam" id="PF02502">
    <property type="entry name" value="LacAB_rpiB"/>
    <property type="match status" value="1"/>
</dbReference>
<dbReference type="PIRSF" id="PIRSF005384">
    <property type="entry name" value="RpiB_LacA_B"/>
    <property type="match status" value="1"/>
</dbReference>
<dbReference type="SUPFAM" id="SSF89623">
    <property type="entry name" value="Ribose/Galactose isomerase RpiB/AlsB"/>
    <property type="match status" value="1"/>
</dbReference>
<evidence type="ECO:0000255" key="1">
    <source>
        <dbReference type="HAMAP-Rule" id="MF_01556"/>
    </source>
</evidence>
<gene>
    <name evidence="1" type="primary">lacB</name>
</gene>
<accession>P0C1R6</accession>
<accession>P26592</accession>
<accession>P68796</accession>
<name>LACB_STAAU</name>
<organism>
    <name type="scientific">Staphylococcus aureus</name>
    <dbReference type="NCBI Taxonomy" id="1280"/>
    <lineage>
        <taxon>Bacteria</taxon>
        <taxon>Bacillati</taxon>
        <taxon>Bacillota</taxon>
        <taxon>Bacilli</taxon>
        <taxon>Bacillales</taxon>
        <taxon>Staphylococcaceae</taxon>
        <taxon>Staphylococcus</taxon>
    </lineage>
</organism>